<accession>Q8YVS3</accession>
<comment type="function">
    <text evidence="1">Catalyzes the conversion of 3'-phosphate to a 2',3'-cyclic phosphodiester at the end of RNA. The mechanism of action of the enzyme occurs in 3 steps: (A) adenylation of the enzyme by ATP; (B) transfer of adenylate to an RNA-N3'P to produce RNA-N3'PP5'A; (C) and attack of the adjacent 2'-hydroxyl on the 3'-phosphorus in the diester linkage to produce the cyclic end product. The biological role of this enzyme is unknown but it is likely to function in some aspects of cellular RNA processing (By similarity).</text>
</comment>
<comment type="catalytic activity">
    <reaction>
        <text>a 3'-end 3'-phospho-ribonucleotide-RNA + ATP = a 3'-end 2',3'-cyclophospho-ribonucleotide-RNA + AMP + diphosphate</text>
        <dbReference type="Rhea" id="RHEA:23976"/>
        <dbReference type="Rhea" id="RHEA-COMP:10463"/>
        <dbReference type="Rhea" id="RHEA-COMP:10464"/>
        <dbReference type="ChEBI" id="CHEBI:30616"/>
        <dbReference type="ChEBI" id="CHEBI:33019"/>
        <dbReference type="ChEBI" id="CHEBI:83062"/>
        <dbReference type="ChEBI" id="CHEBI:83064"/>
        <dbReference type="ChEBI" id="CHEBI:456215"/>
        <dbReference type="EC" id="6.5.1.4"/>
    </reaction>
</comment>
<comment type="subcellular location">
    <subcellularLocation>
        <location evidence="2">Cytoplasm</location>
    </subcellularLocation>
</comment>
<comment type="similarity">
    <text evidence="2">Belongs to the RNA 3'-terminal cyclase family. Type 1 subfamily.</text>
</comment>
<organism>
    <name type="scientific">Nostoc sp. (strain PCC 7120 / SAG 25.82 / UTEX 2576)</name>
    <dbReference type="NCBI Taxonomy" id="103690"/>
    <lineage>
        <taxon>Bacteria</taxon>
        <taxon>Bacillati</taxon>
        <taxon>Cyanobacteriota</taxon>
        <taxon>Cyanophyceae</taxon>
        <taxon>Nostocales</taxon>
        <taxon>Nostocaceae</taxon>
        <taxon>Nostoc</taxon>
    </lineage>
</organism>
<keyword id="KW-0067">ATP-binding</keyword>
<keyword id="KW-0963">Cytoplasm</keyword>
<keyword id="KW-0436">Ligase</keyword>
<keyword id="KW-0547">Nucleotide-binding</keyword>
<keyword id="KW-1185">Reference proteome</keyword>
<gene>
    <name type="primary">rtcA</name>
    <name type="ordered locus">alr1901</name>
</gene>
<sequence>MINIDGSYGEGGGQVLRTSLSLAAITGEPIRIAGIRAGRRKPGLAAQHLTAVRAAARICHGELQGDALGSTMLEFIPGGGVKAGNYIFDVSEVQQGGSAGAITLVLQTILLPLALADGDSHITLRGGTHVIFSPTVTYIERVYLPMLCRMGIKAQVKLGAWGWYPRGGGEVNLQVKGGCQLCGLNLLERGELKRVQGLAVATELPAHIPQRMANRAENLLRTAGLRVSMQALREKGVAPGAGIFLTAEYCNSLTGFGGFGRLRLSSEKVAEIACGQLLQFHETGAPVDEHLADQLLLPAVLASESSQYKVAEVSTHLTTNAAVIEKFGLGKITVNQAERVVAIASSKV</sequence>
<proteinExistence type="inferred from homology"/>
<dbReference type="EC" id="6.5.1.4"/>
<dbReference type="EMBL" id="BA000019">
    <property type="protein sequence ID" value="BAB73600.1"/>
    <property type="molecule type" value="Genomic_DNA"/>
</dbReference>
<dbReference type="PIR" id="AG2043">
    <property type="entry name" value="AG2043"/>
</dbReference>
<dbReference type="RefSeq" id="WP_010996065.1">
    <property type="nucleotide sequence ID" value="NC_003272.1"/>
</dbReference>
<dbReference type="SMR" id="Q8YVS3"/>
<dbReference type="STRING" id="103690.gene:10493920"/>
<dbReference type="KEGG" id="ana:alr1901"/>
<dbReference type="eggNOG" id="COG0430">
    <property type="taxonomic scope" value="Bacteria"/>
</dbReference>
<dbReference type="OrthoDB" id="9789235at2"/>
<dbReference type="Proteomes" id="UP000002483">
    <property type="component" value="Chromosome"/>
</dbReference>
<dbReference type="GO" id="GO:0005737">
    <property type="term" value="C:cytoplasm"/>
    <property type="evidence" value="ECO:0007669"/>
    <property type="project" value="UniProtKB-SubCell"/>
</dbReference>
<dbReference type="GO" id="GO:0005524">
    <property type="term" value="F:ATP binding"/>
    <property type="evidence" value="ECO:0007669"/>
    <property type="project" value="UniProtKB-KW"/>
</dbReference>
<dbReference type="GO" id="GO:0003963">
    <property type="term" value="F:RNA-3'-phosphate cyclase activity"/>
    <property type="evidence" value="ECO:0007669"/>
    <property type="project" value="UniProtKB-UniRule"/>
</dbReference>
<dbReference type="GO" id="GO:0006396">
    <property type="term" value="P:RNA processing"/>
    <property type="evidence" value="ECO:0007669"/>
    <property type="project" value="InterPro"/>
</dbReference>
<dbReference type="CDD" id="cd00874">
    <property type="entry name" value="RNA_Cyclase_Class_II"/>
    <property type="match status" value="1"/>
</dbReference>
<dbReference type="Gene3D" id="3.65.10.20">
    <property type="entry name" value="RNA 3'-terminal phosphate cyclase domain"/>
    <property type="match status" value="1"/>
</dbReference>
<dbReference type="Gene3D" id="3.30.360.20">
    <property type="entry name" value="RNA 3'-terminal phosphate cyclase, insert domain"/>
    <property type="match status" value="1"/>
</dbReference>
<dbReference type="HAMAP" id="MF_00200">
    <property type="entry name" value="RTC"/>
    <property type="match status" value="1"/>
</dbReference>
<dbReference type="InterPro" id="IPR013791">
    <property type="entry name" value="RNA3'-term_phos_cycl_insert"/>
</dbReference>
<dbReference type="InterPro" id="IPR023797">
    <property type="entry name" value="RNA3'_phos_cyclase_dom"/>
</dbReference>
<dbReference type="InterPro" id="IPR037136">
    <property type="entry name" value="RNA3'_phos_cyclase_dom_sf"/>
</dbReference>
<dbReference type="InterPro" id="IPR000228">
    <property type="entry name" value="RNA3'_term_phos_cyc"/>
</dbReference>
<dbReference type="InterPro" id="IPR017770">
    <property type="entry name" value="RNA3'_term_phos_cyc_type_1"/>
</dbReference>
<dbReference type="InterPro" id="IPR013792">
    <property type="entry name" value="RNA3'P_cycl/enolpyr_Trfase_a/b"/>
</dbReference>
<dbReference type="InterPro" id="IPR036553">
    <property type="entry name" value="RPTC_insert"/>
</dbReference>
<dbReference type="NCBIfam" id="NF003246">
    <property type="entry name" value="PRK04204.1-2"/>
    <property type="match status" value="1"/>
</dbReference>
<dbReference type="NCBIfam" id="TIGR03399">
    <property type="entry name" value="RNA_3prim_cycl"/>
    <property type="match status" value="1"/>
</dbReference>
<dbReference type="PANTHER" id="PTHR11096">
    <property type="entry name" value="RNA 3' TERMINAL PHOSPHATE CYCLASE"/>
    <property type="match status" value="1"/>
</dbReference>
<dbReference type="PANTHER" id="PTHR11096:SF0">
    <property type="entry name" value="RNA 3'-TERMINAL PHOSPHATE CYCLASE"/>
    <property type="match status" value="1"/>
</dbReference>
<dbReference type="Pfam" id="PF01137">
    <property type="entry name" value="RTC"/>
    <property type="match status" value="1"/>
</dbReference>
<dbReference type="Pfam" id="PF05189">
    <property type="entry name" value="RTC_insert"/>
    <property type="match status" value="1"/>
</dbReference>
<dbReference type="PIRSF" id="PIRSF005378">
    <property type="entry name" value="RNA3'_term_phos_cycl_euk"/>
    <property type="match status" value="1"/>
</dbReference>
<dbReference type="SUPFAM" id="SSF55205">
    <property type="entry name" value="EPT/RTPC-like"/>
    <property type="match status" value="1"/>
</dbReference>
<dbReference type="SUPFAM" id="SSF52913">
    <property type="entry name" value="RNA 3'-terminal phosphate cyclase, RPTC, insert domain"/>
    <property type="match status" value="1"/>
</dbReference>
<reference key="1">
    <citation type="journal article" date="2001" name="DNA Res.">
        <title>Complete genomic sequence of the filamentous nitrogen-fixing cyanobacterium Anabaena sp. strain PCC 7120.</title>
        <authorList>
            <person name="Kaneko T."/>
            <person name="Nakamura Y."/>
            <person name="Wolk C.P."/>
            <person name="Kuritz T."/>
            <person name="Sasamoto S."/>
            <person name="Watanabe A."/>
            <person name="Iriguchi M."/>
            <person name="Ishikawa A."/>
            <person name="Kawashima K."/>
            <person name="Kimura T."/>
            <person name="Kishida Y."/>
            <person name="Kohara M."/>
            <person name="Matsumoto M."/>
            <person name="Matsuno A."/>
            <person name="Muraki A."/>
            <person name="Nakazaki N."/>
            <person name="Shimpo S."/>
            <person name="Sugimoto M."/>
            <person name="Takazawa M."/>
            <person name="Yamada M."/>
            <person name="Yasuda M."/>
            <person name="Tabata S."/>
        </authorList>
    </citation>
    <scope>NUCLEOTIDE SEQUENCE [LARGE SCALE GENOMIC DNA]</scope>
    <source>
        <strain>PCC 7120 / SAG 25.82 / UTEX 2576</strain>
    </source>
</reference>
<evidence type="ECO:0000250" key="1"/>
<evidence type="ECO:0000305" key="2"/>
<name>RTCA_NOSS1</name>
<feature type="chain" id="PRO_0000156414" description="RNA 3'-terminal phosphate cyclase">
    <location>
        <begin position="1"/>
        <end position="348"/>
    </location>
</feature>
<feature type="active site" description="Tele-AMP-histidine intermediate" evidence="1">
    <location>
        <position position="316"/>
    </location>
</feature>
<feature type="binding site" evidence="1">
    <location>
        <position position="107"/>
    </location>
    <ligand>
        <name>ATP</name>
        <dbReference type="ChEBI" id="CHEBI:30616"/>
    </ligand>
</feature>
<feature type="binding site" evidence="1">
    <location>
        <begin position="290"/>
        <end position="294"/>
    </location>
    <ligand>
        <name>ATP</name>
        <dbReference type="ChEBI" id="CHEBI:30616"/>
    </ligand>
</feature>
<protein>
    <recommendedName>
        <fullName>RNA 3'-terminal phosphate cyclase</fullName>
        <shortName>RNA cyclase</shortName>
        <shortName>RNA-3'-phosphate cyclase</shortName>
        <ecNumber>6.5.1.4</ecNumber>
    </recommendedName>
</protein>